<organism>
    <name type="scientific">Thalassiosira pseudonana</name>
    <name type="common">Marine diatom</name>
    <name type="synonym">Cyclotella nana</name>
    <dbReference type="NCBI Taxonomy" id="35128"/>
    <lineage>
        <taxon>Eukaryota</taxon>
        <taxon>Sar</taxon>
        <taxon>Stramenopiles</taxon>
        <taxon>Ochrophyta</taxon>
        <taxon>Bacillariophyta</taxon>
        <taxon>Coscinodiscophyceae</taxon>
        <taxon>Thalassiosirophycidae</taxon>
        <taxon>Thalassiosirales</taxon>
        <taxon>Thalassiosiraceae</taxon>
        <taxon>Thalassiosira</taxon>
    </lineage>
</organism>
<geneLocation type="chloroplast"/>
<keyword id="KW-0150">Chloroplast</keyword>
<keyword id="KW-0934">Plastid</keyword>
<keyword id="KW-0687">Ribonucleoprotein</keyword>
<keyword id="KW-0689">Ribosomal protein</keyword>
<name>RK2_THAPS</name>
<dbReference type="EMBL" id="EF067921">
    <property type="protein sequence ID" value="ABK20810.1"/>
    <property type="molecule type" value="Genomic_DNA"/>
</dbReference>
<dbReference type="RefSeq" id="YP_874587.1">
    <property type="nucleotide sequence ID" value="NC_008589.1"/>
</dbReference>
<dbReference type="SMR" id="A0T0X5"/>
<dbReference type="FunCoup" id="A0T0X5">
    <property type="interactions" value="83"/>
</dbReference>
<dbReference type="STRING" id="35128.A0T0X5"/>
<dbReference type="GeneID" id="4524750"/>
<dbReference type="InParanoid" id="A0T0X5"/>
<dbReference type="GO" id="GO:0009507">
    <property type="term" value="C:chloroplast"/>
    <property type="evidence" value="ECO:0007669"/>
    <property type="project" value="UniProtKB-SubCell"/>
</dbReference>
<dbReference type="GO" id="GO:0005762">
    <property type="term" value="C:mitochondrial large ribosomal subunit"/>
    <property type="evidence" value="ECO:0000318"/>
    <property type="project" value="GO_Central"/>
</dbReference>
<dbReference type="GO" id="GO:0003723">
    <property type="term" value="F:RNA binding"/>
    <property type="evidence" value="ECO:0000318"/>
    <property type="project" value="GO_Central"/>
</dbReference>
<dbReference type="GO" id="GO:0019843">
    <property type="term" value="F:rRNA binding"/>
    <property type="evidence" value="ECO:0007669"/>
    <property type="project" value="UniProtKB-UniRule"/>
</dbReference>
<dbReference type="GO" id="GO:0003735">
    <property type="term" value="F:structural constituent of ribosome"/>
    <property type="evidence" value="ECO:0000318"/>
    <property type="project" value="GO_Central"/>
</dbReference>
<dbReference type="GO" id="GO:0016740">
    <property type="term" value="F:transferase activity"/>
    <property type="evidence" value="ECO:0007669"/>
    <property type="project" value="InterPro"/>
</dbReference>
<dbReference type="GO" id="GO:0032543">
    <property type="term" value="P:mitochondrial translation"/>
    <property type="evidence" value="ECO:0000318"/>
    <property type="project" value="GO_Central"/>
</dbReference>
<dbReference type="FunFam" id="2.30.30.30:FF:000001">
    <property type="entry name" value="50S ribosomal protein L2"/>
    <property type="match status" value="1"/>
</dbReference>
<dbReference type="FunFam" id="2.40.50.140:FF:000003">
    <property type="entry name" value="50S ribosomal protein L2"/>
    <property type="match status" value="1"/>
</dbReference>
<dbReference type="FunFam" id="4.10.950.10:FF:000001">
    <property type="entry name" value="50S ribosomal protein L2"/>
    <property type="match status" value="1"/>
</dbReference>
<dbReference type="Gene3D" id="2.30.30.30">
    <property type="match status" value="1"/>
</dbReference>
<dbReference type="Gene3D" id="2.40.50.140">
    <property type="entry name" value="Nucleic acid-binding proteins"/>
    <property type="match status" value="1"/>
</dbReference>
<dbReference type="Gene3D" id="4.10.950.10">
    <property type="entry name" value="Ribosomal protein L2, domain 3"/>
    <property type="match status" value="1"/>
</dbReference>
<dbReference type="HAMAP" id="MF_01320_B">
    <property type="entry name" value="Ribosomal_uL2_B"/>
    <property type="match status" value="1"/>
</dbReference>
<dbReference type="InterPro" id="IPR012340">
    <property type="entry name" value="NA-bd_OB-fold"/>
</dbReference>
<dbReference type="InterPro" id="IPR014722">
    <property type="entry name" value="Rib_uL2_dom2"/>
</dbReference>
<dbReference type="InterPro" id="IPR002171">
    <property type="entry name" value="Ribosomal_uL2"/>
</dbReference>
<dbReference type="InterPro" id="IPR005880">
    <property type="entry name" value="Ribosomal_uL2_bac/org-type"/>
</dbReference>
<dbReference type="InterPro" id="IPR022669">
    <property type="entry name" value="Ribosomal_uL2_C"/>
</dbReference>
<dbReference type="InterPro" id="IPR022671">
    <property type="entry name" value="Ribosomal_uL2_CS"/>
</dbReference>
<dbReference type="InterPro" id="IPR014726">
    <property type="entry name" value="Ribosomal_uL2_dom3"/>
</dbReference>
<dbReference type="InterPro" id="IPR022666">
    <property type="entry name" value="Ribosomal_uL2_RNA-bd_dom"/>
</dbReference>
<dbReference type="InterPro" id="IPR008991">
    <property type="entry name" value="Translation_prot_SH3-like_sf"/>
</dbReference>
<dbReference type="NCBIfam" id="TIGR01171">
    <property type="entry name" value="rplB_bact"/>
    <property type="match status" value="1"/>
</dbReference>
<dbReference type="PANTHER" id="PTHR13691:SF5">
    <property type="entry name" value="LARGE RIBOSOMAL SUBUNIT PROTEIN UL2M"/>
    <property type="match status" value="1"/>
</dbReference>
<dbReference type="PANTHER" id="PTHR13691">
    <property type="entry name" value="RIBOSOMAL PROTEIN L2"/>
    <property type="match status" value="1"/>
</dbReference>
<dbReference type="Pfam" id="PF00181">
    <property type="entry name" value="Ribosomal_L2"/>
    <property type="match status" value="1"/>
</dbReference>
<dbReference type="Pfam" id="PF03947">
    <property type="entry name" value="Ribosomal_L2_C"/>
    <property type="match status" value="1"/>
</dbReference>
<dbReference type="PIRSF" id="PIRSF002158">
    <property type="entry name" value="Ribosomal_L2"/>
    <property type="match status" value="1"/>
</dbReference>
<dbReference type="SMART" id="SM01383">
    <property type="entry name" value="Ribosomal_L2"/>
    <property type="match status" value="1"/>
</dbReference>
<dbReference type="SMART" id="SM01382">
    <property type="entry name" value="Ribosomal_L2_C"/>
    <property type="match status" value="1"/>
</dbReference>
<dbReference type="SUPFAM" id="SSF50249">
    <property type="entry name" value="Nucleic acid-binding proteins"/>
    <property type="match status" value="1"/>
</dbReference>
<dbReference type="SUPFAM" id="SSF50104">
    <property type="entry name" value="Translation proteins SH3-like domain"/>
    <property type="match status" value="1"/>
</dbReference>
<dbReference type="PROSITE" id="PS00467">
    <property type="entry name" value="RIBOSOMAL_L2"/>
    <property type="match status" value="1"/>
</dbReference>
<proteinExistence type="inferred from homology"/>
<sequence length="275" mass="30674">MSIRLYKSYTPGTRNRALSAFSEITTDKPEKSLVKKNHRNKGRNNRGVITIRHRGGGHKKQYRLIDFKRNKYNISAVVNSIEYDPNRNARIALLHFTDGEKRYILHPNNLNVGDTILSGKGISLDIGNSLPLEEIPLGSSVHNIELIPNRGGQIVRSAGTSAKILAKEGNYVTLRLPSKEIRLIRKECFATIGEVSNNDAFLIQSGKAGRTRWLGKRPTVRGSVMNPCDHPHGGGEGRTPIGRTRPLTPWGKPALGKKTRKTKKLSSAYILRRRS</sequence>
<protein>
    <recommendedName>
        <fullName evidence="2">Large ribosomal subunit protein uL2c</fullName>
    </recommendedName>
    <alternativeName>
        <fullName evidence="4">50S ribosomal protein L2, chloroplastic</fullName>
    </alternativeName>
</protein>
<comment type="subunit">
    <text evidence="1">Part of the 50S ribosomal subunit.</text>
</comment>
<comment type="subcellular location">
    <subcellularLocation>
        <location>Plastid</location>
        <location>Chloroplast</location>
    </subcellularLocation>
</comment>
<comment type="similarity">
    <text evidence="4">Belongs to the universal ribosomal protein uL2 family.</text>
</comment>
<evidence type="ECO:0000250" key="1"/>
<evidence type="ECO:0000255" key="2">
    <source>
        <dbReference type="HAMAP-Rule" id="MF_01320"/>
    </source>
</evidence>
<evidence type="ECO:0000256" key="3">
    <source>
        <dbReference type="SAM" id="MobiDB-lite"/>
    </source>
</evidence>
<evidence type="ECO:0000305" key="4"/>
<reference key="1">
    <citation type="journal article" date="2007" name="Mol. Genet. Genomics">
        <title>Chloroplast genomes of the diatoms Phaeodactylum tricornutum and Thalassiosira pseudonana: comparison with other plastid genomes of the red lineage.</title>
        <authorList>
            <person name="Oudot-Le Secq M.-P."/>
            <person name="Grimwood J."/>
            <person name="Shapiro H."/>
            <person name="Armbrust E.V."/>
            <person name="Bowler C."/>
            <person name="Green B.R."/>
        </authorList>
    </citation>
    <scope>NUCLEOTIDE SEQUENCE [LARGE SCALE GENOMIC DNA]</scope>
    <source>
        <strain>CCMP1335 / NEPCC58 / CCAP 1085/12</strain>
    </source>
</reference>
<feature type="chain" id="PRO_0000277105" description="Large ribosomal subunit protein uL2c">
    <location>
        <begin position="1"/>
        <end position="275"/>
    </location>
</feature>
<feature type="region of interest" description="Disordered" evidence="3">
    <location>
        <begin position="219"/>
        <end position="267"/>
    </location>
</feature>
<feature type="compositionally biased region" description="Basic residues" evidence="3">
    <location>
        <begin position="255"/>
        <end position="264"/>
    </location>
</feature>
<gene>
    <name type="primary">rpl2</name>
</gene>
<accession>A0T0X5</accession>